<reference key="1">
    <citation type="journal article" date="2004" name="Genome Res.">
        <title>The genome sequence of Mycoplasma mycoides subsp. mycoides SC type strain PG1T, the causative agent of contagious bovine pleuropneumonia (CBPP).</title>
        <authorList>
            <person name="Westberg J."/>
            <person name="Persson A."/>
            <person name="Holmberg A."/>
            <person name="Goesmann A."/>
            <person name="Lundeberg J."/>
            <person name="Johansson K.-E."/>
            <person name="Pettersson B."/>
            <person name="Uhlen M."/>
        </authorList>
    </citation>
    <scope>NUCLEOTIDE SEQUENCE [LARGE SCALE GENOMIC DNA]</scope>
    <source>
        <strain>CCUG 32753 / NCTC 10114 / PG1</strain>
    </source>
</reference>
<evidence type="ECO:0000255" key="1">
    <source>
        <dbReference type="HAMAP-Rule" id="MF_01037"/>
    </source>
</evidence>
<protein>
    <recommendedName>
        <fullName evidence="1">Methylenetetrahydrofolate--tRNA-(uracil-5-)-methyltransferase TrmFO 1</fullName>
        <ecNumber evidence="1">2.1.1.74</ecNumber>
    </recommendedName>
    <alternativeName>
        <fullName evidence="1">Folate-dependent tRNA (uracil-5-)-methyltransferase 1</fullName>
    </alternativeName>
    <alternativeName>
        <fullName evidence="1">Folate-dependent tRNA(M-5-U54)-methyltransferase 1</fullName>
    </alternativeName>
</protein>
<comment type="function">
    <text evidence="1">Catalyzes the folate-dependent formation of 5-methyl-uridine at position 54 (M-5-U54) in all tRNAs.</text>
</comment>
<comment type="catalytic activity">
    <reaction evidence="1">
        <text>uridine(54) in tRNA + (6R)-5,10-methylene-5,6,7,8-tetrahydrofolate + NADH + H(+) = 5-methyluridine(54) in tRNA + (6S)-5,6,7,8-tetrahydrofolate + NAD(+)</text>
        <dbReference type="Rhea" id="RHEA:16873"/>
        <dbReference type="Rhea" id="RHEA-COMP:10167"/>
        <dbReference type="Rhea" id="RHEA-COMP:10193"/>
        <dbReference type="ChEBI" id="CHEBI:15378"/>
        <dbReference type="ChEBI" id="CHEBI:15636"/>
        <dbReference type="ChEBI" id="CHEBI:57453"/>
        <dbReference type="ChEBI" id="CHEBI:57540"/>
        <dbReference type="ChEBI" id="CHEBI:57945"/>
        <dbReference type="ChEBI" id="CHEBI:65315"/>
        <dbReference type="ChEBI" id="CHEBI:74447"/>
        <dbReference type="EC" id="2.1.1.74"/>
    </reaction>
</comment>
<comment type="catalytic activity">
    <reaction evidence="1">
        <text>uridine(54) in tRNA + (6R)-5,10-methylene-5,6,7,8-tetrahydrofolate + NADPH + H(+) = 5-methyluridine(54) in tRNA + (6S)-5,6,7,8-tetrahydrofolate + NADP(+)</text>
        <dbReference type="Rhea" id="RHEA:62372"/>
        <dbReference type="Rhea" id="RHEA-COMP:10167"/>
        <dbReference type="Rhea" id="RHEA-COMP:10193"/>
        <dbReference type="ChEBI" id="CHEBI:15378"/>
        <dbReference type="ChEBI" id="CHEBI:15636"/>
        <dbReference type="ChEBI" id="CHEBI:57453"/>
        <dbReference type="ChEBI" id="CHEBI:57783"/>
        <dbReference type="ChEBI" id="CHEBI:58349"/>
        <dbReference type="ChEBI" id="CHEBI:65315"/>
        <dbReference type="ChEBI" id="CHEBI:74447"/>
        <dbReference type="EC" id="2.1.1.74"/>
    </reaction>
</comment>
<comment type="cofactor">
    <cofactor evidence="1">
        <name>FAD</name>
        <dbReference type="ChEBI" id="CHEBI:57692"/>
    </cofactor>
</comment>
<comment type="subcellular location">
    <subcellularLocation>
        <location evidence="1">Cytoplasm</location>
    </subcellularLocation>
</comment>
<comment type="similarity">
    <text evidence="1">Belongs to the MnmG family. TrmFO subfamily.</text>
</comment>
<dbReference type="EC" id="2.1.1.74" evidence="1"/>
<dbReference type="EMBL" id="BX293980">
    <property type="protein sequence ID" value="CAE77010.1"/>
    <property type="molecule type" value="Genomic_DNA"/>
</dbReference>
<dbReference type="RefSeq" id="NP_975368.1">
    <property type="nucleotide sequence ID" value="NC_005364.2"/>
</dbReference>
<dbReference type="RefSeq" id="WP_011166566.1">
    <property type="nucleotide sequence ID" value="NC_005364.2"/>
</dbReference>
<dbReference type="SMR" id="Q6MTM6"/>
<dbReference type="STRING" id="272632.MSC_0375"/>
<dbReference type="KEGG" id="mmy:MSC_0375"/>
<dbReference type="PATRIC" id="fig|272632.4.peg.406"/>
<dbReference type="eggNOG" id="COG1206">
    <property type="taxonomic scope" value="Bacteria"/>
</dbReference>
<dbReference type="HOGENOM" id="CLU_033057_1_0_14"/>
<dbReference type="Proteomes" id="UP000001016">
    <property type="component" value="Chromosome"/>
</dbReference>
<dbReference type="GO" id="GO:0005829">
    <property type="term" value="C:cytosol"/>
    <property type="evidence" value="ECO:0007669"/>
    <property type="project" value="TreeGrafter"/>
</dbReference>
<dbReference type="GO" id="GO:0050660">
    <property type="term" value="F:flavin adenine dinucleotide binding"/>
    <property type="evidence" value="ECO:0007669"/>
    <property type="project" value="UniProtKB-UniRule"/>
</dbReference>
<dbReference type="GO" id="GO:0047151">
    <property type="term" value="F:tRNA (uracil(54)-C5)-methyltransferase activity, 5,10-methylenetetrahydrofolate-dependent"/>
    <property type="evidence" value="ECO:0007669"/>
    <property type="project" value="UniProtKB-UniRule"/>
</dbReference>
<dbReference type="GO" id="GO:0030488">
    <property type="term" value="P:tRNA methylation"/>
    <property type="evidence" value="ECO:0007669"/>
    <property type="project" value="TreeGrafter"/>
</dbReference>
<dbReference type="GO" id="GO:0002098">
    <property type="term" value="P:tRNA wobble uridine modification"/>
    <property type="evidence" value="ECO:0007669"/>
    <property type="project" value="TreeGrafter"/>
</dbReference>
<dbReference type="Gene3D" id="3.50.50.60">
    <property type="entry name" value="FAD/NAD(P)-binding domain"/>
    <property type="match status" value="2"/>
</dbReference>
<dbReference type="HAMAP" id="MF_01037">
    <property type="entry name" value="TrmFO"/>
    <property type="match status" value="1"/>
</dbReference>
<dbReference type="InterPro" id="IPR036188">
    <property type="entry name" value="FAD/NAD-bd_sf"/>
</dbReference>
<dbReference type="InterPro" id="IPR002218">
    <property type="entry name" value="MnmG-rel"/>
</dbReference>
<dbReference type="InterPro" id="IPR040131">
    <property type="entry name" value="MnmG_N"/>
</dbReference>
<dbReference type="InterPro" id="IPR004417">
    <property type="entry name" value="TrmFO"/>
</dbReference>
<dbReference type="NCBIfam" id="NF003739">
    <property type="entry name" value="PRK05335.1"/>
    <property type="match status" value="1"/>
</dbReference>
<dbReference type="PANTHER" id="PTHR11806">
    <property type="entry name" value="GLUCOSE INHIBITED DIVISION PROTEIN A"/>
    <property type="match status" value="1"/>
</dbReference>
<dbReference type="PANTHER" id="PTHR11806:SF2">
    <property type="entry name" value="METHYLENETETRAHYDROFOLATE--TRNA-(URACIL-5-)-METHYLTRANSFERASE TRMFO"/>
    <property type="match status" value="1"/>
</dbReference>
<dbReference type="Pfam" id="PF01134">
    <property type="entry name" value="GIDA"/>
    <property type="match status" value="1"/>
</dbReference>
<dbReference type="SUPFAM" id="SSF51905">
    <property type="entry name" value="FAD/NAD(P)-binding domain"/>
    <property type="match status" value="1"/>
</dbReference>
<name>TMFO1_MYCMS</name>
<accession>Q6MTM6</accession>
<proteinExistence type="inferred from homology"/>
<sequence length="424" mass="49082">MKTIRIIGAGLSGCEAAYYLLKKGYFVELYEIKTIKKNPIQHYDYFCELAYSDSFRSTDLNTSVGTLKKELELLDSLIIKAAKYASINQNNELVVNRIEFSKYITNYLKTFNNLKIIEQEYLNIDLNIPTIIAIGPISTPSFLTNLKKIINKKNLKLFDTVEPTILKQSINKNICYSLDNNLDYLYCDLNKEQFEKFYNALISAKTFNSPLKNEIKLLEKNNYFSIESLAKNKQEFINHFKPINNNAYITITLKKDSVIDNLYTIVNFQTSLMWNEQLKVFSLIPGLENLKIMRYGVMHKNNYINTKKLLNLGVQLKTNKNIFFAGQIIGVDGYVESVCSGLISAINLDRYLNNKKMILPNKNSTIGSLYNYLLKTDSNFNPMRINWALVDLIDGFELSDNSKKFYSKRAIELIKQYLKKINYK</sequence>
<organism>
    <name type="scientific">Mycoplasma mycoides subsp. mycoides SC (strain CCUG 32753 / NCTC 10114 / PG1)</name>
    <dbReference type="NCBI Taxonomy" id="272632"/>
    <lineage>
        <taxon>Bacteria</taxon>
        <taxon>Bacillati</taxon>
        <taxon>Mycoplasmatota</taxon>
        <taxon>Mollicutes</taxon>
        <taxon>Mycoplasmataceae</taxon>
        <taxon>Mycoplasma</taxon>
    </lineage>
</organism>
<feature type="chain" id="PRO_0000346364" description="Methylenetetrahydrofolate--tRNA-(uracil-5-)-methyltransferase TrmFO 1">
    <location>
        <begin position="1"/>
        <end position="424"/>
    </location>
</feature>
<feature type="binding site" evidence="1">
    <location>
        <begin position="8"/>
        <end position="13"/>
    </location>
    <ligand>
        <name>FAD</name>
        <dbReference type="ChEBI" id="CHEBI:57692"/>
    </ligand>
</feature>
<gene>
    <name evidence="1" type="primary">trmFO1</name>
    <name type="ordered locus">MSC_0375</name>
</gene>
<keyword id="KW-0963">Cytoplasm</keyword>
<keyword id="KW-0274">FAD</keyword>
<keyword id="KW-0285">Flavoprotein</keyword>
<keyword id="KW-0489">Methyltransferase</keyword>
<keyword id="KW-0520">NAD</keyword>
<keyword id="KW-0521">NADP</keyword>
<keyword id="KW-1185">Reference proteome</keyword>
<keyword id="KW-0808">Transferase</keyword>
<keyword id="KW-0819">tRNA processing</keyword>